<keyword id="KW-0328">Glycosyltransferase</keyword>
<keyword id="KW-0441">Lipid A biosynthesis</keyword>
<keyword id="KW-0444">Lipid biosynthesis</keyword>
<keyword id="KW-0443">Lipid metabolism</keyword>
<keyword id="KW-0808">Transferase</keyword>
<feature type="chain" id="PRO_0000255211" description="Lipid-A-disaccharide synthase">
    <location>
        <begin position="1"/>
        <end position="402"/>
    </location>
</feature>
<sequence length="402" mass="43359">MVDAAIRGTLPAGTGTNASQRGTIAMVAGEASGDLLASLMLGGLKARLGDTVSYAGIGGKRMMTEGFVSQWPMETLSVNGYVEVLGSLREILATRRAIRDSLLANPPLCFIGVDAPDFNFGLEVPLRRAGIPVVHFVSPSIWAWRGGRIRTIARAVDHILCLFPFEPEIYAKAGIPATYVGHPLADVIPMVPDVAGARAALDLPAGCRVVAVLPGSRQSEVRNLGATFFAAMARMHRMDPNLAFVLPAASAPLRAIVEELHQQYPELRLTIVDGNSHQAMEAADVVLLASGTATLEAALYKKPMVISYKVPWLTAQIMKRQGYLPYVGLPNILSGRFVVPELLQDDATPEALARETLLQLNDQGNIAFLYEHFTRMHETLKCNTAQLAADVVVDLMRSRGLV</sequence>
<proteinExistence type="inferred from homology"/>
<comment type="function">
    <text evidence="1">Condensation of UDP-2,3-diacylglucosamine and 2,3-diacylglucosamine-1-phosphate to form lipid A disaccharide, a precursor of lipid A, a phosphorylated glycolipid that anchors the lipopolysaccharide to the outer membrane of the cell.</text>
</comment>
<comment type="catalytic activity">
    <reaction evidence="1">
        <text>a lipid X + a UDP-2-N,3-O-bis[(3R)-3-hydroxyacyl]-alpha-D-glucosamine = a lipid A disaccharide + UDP + H(+)</text>
        <dbReference type="Rhea" id="RHEA:67828"/>
        <dbReference type="ChEBI" id="CHEBI:15378"/>
        <dbReference type="ChEBI" id="CHEBI:58223"/>
        <dbReference type="ChEBI" id="CHEBI:137748"/>
        <dbReference type="ChEBI" id="CHEBI:176338"/>
        <dbReference type="ChEBI" id="CHEBI:176343"/>
        <dbReference type="EC" id="2.4.1.182"/>
    </reaction>
</comment>
<comment type="pathway">
    <text evidence="1">Bacterial outer membrane biogenesis; LPS lipid A biosynthesis.</text>
</comment>
<comment type="similarity">
    <text evidence="1">Belongs to the LpxB family.</text>
</comment>
<protein>
    <recommendedName>
        <fullName evidence="1">Lipid-A-disaccharide synthase</fullName>
        <ecNumber evidence="1">2.4.1.182</ecNumber>
    </recommendedName>
</protein>
<accession>Q470F0</accession>
<name>LPXB_CUPPJ</name>
<organism>
    <name type="scientific">Cupriavidus pinatubonensis (strain JMP 134 / LMG 1197)</name>
    <name type="common">Cupriavidus necator (strain JMP 134)</name>
    <dbReference type="NCBI Taxonomy" id="264198"/>
    <lineage>
        <taxon>Bacteria</taxon>
        <taxon>Pseudomonadati</taxon>
        <taxon>Pseudomonadota</taxon>
        <taxon>Betaproteobacteria</taxon>
        <taxon>Burkholderiales</taxon>
        <taxon>Burkholderiaceae</taxon>
        <taxon>Cupriavidus</taxon>
    </lineage>
</organism>
<dbReference type="EC" id="2.4.1.182" evidence="1"/>
<dbReference type="EMBL" id="CP000090">
    <property type="protein sequence ID" value="AAZ61233.1"/>
    <property type="molecule type" value="Genomic_DNA"/>
</dbReference>
<dbReference type="SMR" id="Q470F0"/>
<dbReference type="STRING" id="264198.Reut_A1868"/>
<dbReference type="CAZy" id="GT19">
    <property type="family name" value="Glycosyltransferase Family 19"/>
</dbReference>
<dbReference type="KEGG" id="reu:Reut_A1868"/>
<dbReference type="eggNOG" id="COG0763">
    <property type="taxonomic scope" value="Bacteria"/>
</dbReference>
<dbReference type="HOGENOM" id="CLU_036577_3_0_4"/>
<dbReference type="OrthoDB" id="9801642at2"/>
<dbReference type="UniPathway" id="UPA00973"/>
<dbReference type="GO" id="GO:0016020">
    <property type="term" value="C:membrane"/>
    <property type="evidence" value="ECO:0007669"/>
    <property type="project" value="GOC"/>
</dbReference>
<dbReference type="GO" id="GO:0008915">
    <property type="term" value="F:lipid-A-disaccharide synthase activity"/>
    <property type="evidence" value="ECO:0007669"/>
    <property type="project" value="UniProtKB-UniRule"/>
</dbReference>
<dbReference type="GO" id="GO:0005543">
    <property type="term" value="F:phospholipid binding"/>
    <property type="evidence" value="ECO:0007669"/>
    <property type="project" value="TreeGrafter"/>
</dbReference>
<dbReference type="GO" id="GO:0009245">
    <property type="term" value="P:lipid A biosynthetic process"/>
    <property type="evidence" value="ECO:0007669"/>
    <property type="project" value="UniProtKB-UniRule"/>
</dbReference>
<dbReference type="Gene3D" id="3.40.50.2000">
    <property type="entry name" value="Glycogen Phosphorylase B"/>
    <property type="match status" value="1"/>
</dbReference>
<dbReference type="HAMAP" id="MF_00392">
    <property type="entry name" value="LpxB"/>
    <property type="match status" value="1"/>
</dbReference>
<dbReference type="InterPro" id="IPR003835">
    <property type="entry name" value="Glyco_trans_19"/>
</dbReference>
<dbReference type="NCBIfam" id="TIGR00215">
    <property type="entry name" value="lpxB"/>
    <property type="match status" value="1"/>
</dbReference>
<dbReference type="PANTHER" id="PTHR30372">
    <property type="entry name" value="LIPID-A-DISACCHARIDE SYNTHASE"/>
    <property type="match status" value="1"/>
</dbReference>
<dbReference type="PANTHER" id="PTHR30372:SF4">
    <property type="entry name" value="LIPID-A-DISACCHARIDE SYNTHASE, MITOCHONDRIAL-RELATED"/>
    <property type="match status" value="1"/>
</dbReference>
<dbReference type="Pfam" id="PF02684">
    <property type="entry name" value="LpxB"/>
    <property type="match status" value="1"/>
</dbReference>
<dbReference type="SUPFAM" id="SSF53756">
    <property type="entry name" value="UDP-Glycosyltransferase/glycogen phosphorylase"/>
    <property type="match status" value="1"/>
</dbReference>
<gene>
    <name evidence="1" type="primary">lpxB</name>
    <name type="ordered locus">Reut_A1868</name>
</gene>
<reference key="1">
    <citation type="journal article" date="2010" name="PLoS ONE">
        <title>The complete multipartite genome sequence of Cupriavidus necator JMP134, a versatile pollutant degrader.</title>
        <authorList>
            <person name="Lykidis A."/>
            <person name="Perez-Pantoja D."/>
            <person name="Ledger T."/>
            <person name="Mavromatis K."/>
            <person name="Anderson I.J."/>
            <person name="Ivanova N.N."/>
            <person name="Hooper S.D."/>
            <person name="Lapidus A."/>
            <person name="Lucas S."/>
            <person name="Gonzalez B."/>
            <person name="Kyrpides N.C."/>
        </authorList>
    </citation>
    <scope>NUCLEOTIDE SEQUENCE [LARGE SCALE GENOMIC DNA]</scope>
    <source>
        <strain>JMP134 / LMG 1197</strain>
    </source>
</reference>
<evidence type="ECO:0000255" key="1">
    <source>
        <dbReference type="HAMAP-Rule" id="MF_00392"/>
    </source>
</evidence>